<keyword id="KW-0274">FAD</keyword>
<keyword id="KW-0285">Flavoprotein</keyword>
<keyword id="KW-0472">Membrane</keyword>
<keyword id="KW-0496">Mitochondrion</keyword>
<keyword id="KW-1000">Mitochondrion outer membrane</keyword>
<keyword id="KW-0503">Monooxygenase</keyword>
<keyword id="KW-0521">NADP</keyword>
<keyword id="KW-0560">Oxidoreductase</keyword>
<keyword id="KW-0662">Pyridine nucleotide biosynthesis</keyword>
<keyword id="KW-1185">Reference proteome</keyword>
<reference key="1">
    <citation type="journal article" date="2005" name="Nature">
        <title>Genome sequencing and analysis of Aspergillus oryzae.</title>
        <authorList>
            <person name="Machida M."/>
            <person name="Asai K."/>
            <person name="Sano M."/>
            <person name="Tanaka T."/>
            <person name="Kumagai T."/>
            <person name="Terai G."/>
            <person name="Kusumoto K."/>
            <person name="Arima T."/>
            <person name="Akita O."/>
            <person name="Kashiwagi Y."/>
            <person name="Abe K."/>
            <person name="Gomi K."/>
            <person name="Horiuchi H."/>
            <person name="Kitamoto K."/>
            <person name="Kobayashi T."/>
            <person name="Takeuchi M."/>
            <person name="Denning D.W."/>
            <person name="Galagan J.E."/>
            <person name="Nierman W.C."/>
            <person name="Yu J."/>
            <person name="Archer D.B."/>
            <person name="Bennett J.W."/>
            <person name="Bhatnagar D."/>
            <person name="Cleveland T.E."/>
            <person name="Fedorova N.D."/>
            <person name="Gotoh O."/>
            <person name="Horikawa H."/>
            <person name="Hosoyama A."/>
            <person name="Ichinomiya M."/>
            <person name="Igarashi R."/>
            <person name="Iwashita K."/>
            <person name="Juvvadi P.R."/>
            <person name="Kato M."/>
            <person name="Kato Y."/>
            <person name="Kin T."/>
            <person name="Kokubun A."/>
            <person name="Maeda H."/>
            <person name="Maeyama N."/>
            <person name="Maruyama J."/>
            <person name="Nagasaki H."/>
            <person name="Nakajima T."/>
            <person name="Oda K."/>
            <person name="Okada K."/>
            <person name="Paulsen I."/>
            <person name="Sakamoto K."/>
            <person name="Sawano T."/>
            <person name="Takahashi M."/>
            <person name="Takase K."/>
            <person name="Terabayashi Y."/>
            <person name="Wortman J.R."/>
            <person name="Yamada O."/>
            <person name="Yamagata Y."/>
            <person name="Anazawa H."/>
            <person name="Hata Y."/>
            <person name="Koide Y."/>
            <person name="Komori T."/>
            <person name="Koyama Y."/>
            <person name="Minetoki T."/>
            <person name="Suharnan S."/>
            <person name="Tanaka A."/>
            <person name="Isono K."/>
            <person name="Kuhara S."/>
            <person name="Ogasawara N."/>
            <person name="Kikuchi H."/>
        </authorList>
    </citation>
    <scope>NUCLEOTIDE SEQUENCE [LARGE SCALE GENOMIC DNA]</scope>
    <source>
        <strain>ATCC 42149 / RIB 40</strain>
    </source>
</reference>
<protein>
    <recommendedName>
        <fullName evidence="1">Kynurenine 3-monooxygenase</fullName>
        <ecNumber evidence="1">1.14.13.9</ecNumber>
    </recommendedName>
    <alternativeName>
        <fullName evidence="1">Biosynthesis of nicotinic acid protein 4</fullName>
    </alternativeName>
    <alternativeName>
        <fullName evidence="1">Kynurenine 3-hydroxylase</fullName>
    </alternativeName>
</protein>
<accession>Q2UPP1</accession>
<sequence length="510" mass="57017">MAQEPPRKQKVVIVGAGPVGSLAALYAAARGDDVEVYELRGDLRDPTTIPLNFTKSINLALSERGISSLKGSNRDGMIEKILNDAIPMHGRMIHGRDDGKLWEAAQAYDVHGQAINSVDRSTLNNALLDELERTPNVKLFFNHKLTGADFQSNRAWFERRAPGDTPLPGSSNRVPEIEVSFDYMIGADGAHSASRYHMMKYSRVDYQQEYIDTLWCEFRIPPSDTGDFRISPNHLHIWPGKEFMFIALPSPDKSFTCTLFAPAAHYAQLESSPQKLFLSFDANFPGVSPDLITPEDLQEQFKENPHLPLISIKAKPHHYGSNIVIVGDAAHAILPFYGQGLNAGLEDIRVLFDFLDKHDAFDLNASLTARRESRRAAFQAYTDQRTADAHAINDLSKQNYLEMRWGVKTPLYKIRKSIEEALDLYVPSLGWKTQYARVSFSTQRYSDVVKVVHRQGRILGYGFASAVISSITIAGILAWKIPGRLSPLPALQSTVQLLGHVWTKISPKNT</sequence>
<feature type="chain" id="PRO_0000361922" description="Kynurenine 3-monooxygenase">
    <location>
        <begin position="1"/>
        <end position="510"/>
    </location>
</feature>
<proteinExistence type="inferred from homology"/>
<evidence type="ECO:0000255" key="1">
    <source>
        <dbReference type="HAMAP-Rule" id="MF_03018"/>
    </source>
</evidence>
<name>KMO_ASPOR</name>
<dbReference type="EC" id="1.14.13.9" evidence="1"/>
<dbReference type="EMBL" id="BA000049">
    <property type="protein sequence ID" value="BAE56474.1"/>
    <property type="molecule type" value="Genomic_DNA"/>
</dbReference>
<dbReference type="RefSeq" id="XP_001818476.1">
    <property type="nucleotide sequence ID" value="XM_001818424.2"/>
</dbReference>
<dbReference type="SMR" id="Q2UPP1"/>
<dbReference type="STRING" id="510516.Q2UPP1"/>
<dbReference type="EnsemblFungi" id="BAE56474">
    <property type="protein sequence ID" value="BAE56474"/>
    <property type="gene ID" value="AO090005001567"/>
</dbReference>
<dbReference type="GeneID" id="5990421"/>
<dbReference type="KEGG" id="aor:AO090005001567"/>
<dbReference type="VEuPathDB" id="FungiDB:AO090005001567"/>
<dbReference type="HOGENOM" id="CLU_023210_2_1_1"/>
<dbReference type="OMA" id="REFMFIA"/>
<dbReference type="OrthoDB" id="44113at5052"/>
<dbReference type="UniPathway" id="UPA00253">
    <property type="reaction ID" value="UER00328"/>
</dbReference>
<dbReference type="Proteomes" id="UP000006564">
    <property type="component" value="Chromosome 1"/>
</dbReference>
<dbReference type="GO" id="GO:0005741">
    <property type="term" value="C:mitochondrial outer membrane"/>
    <property type="evidence" value="ECO:0007669"/>
    <property type="project" value="UniProtKB-SubCell"/>
</dbReference>
<dbReference type="GO" id="GO:0071949">
    <property type="term" value="F:FAD binding"/>
    <property type="evidence" value="ECO:0007669"/>
    <property type="project" value="InterPro"/>
</dbReference>
<dbReference type="GO" id="GO:0004502">
    <property type="term" value="F:kynurenine 3-monooxygenase activity"/>
    <property type="evidence" value="ECO:0007669"/>
    <property type="project" value="UniProtKB-UniRule"/>
</dbReference>
<dbReference type="GO" id="GO:0034354">
    <property type="term" value="P:'de novo' NAD biosynthetic process from L-tryptophan"/>
    <property type="evidence" value="ECO:0007669"/>
    <property type="project" value="UniProtKB-UniRule"/>
</dbReference>
<dbReference type="GO" id="GO:0043420">
    <property type="term" value="P:anthranilate metabolic process"/>
    <property type="evidence" value="ECO:0007669"/>
    <property type="project" value="UniProtKB-UniRule"/>
</dbReference>
<dbReference type="GO" id="GO:0070189">
    <property type="term" value="P:kynurenine metabolic process"/>
    <property type="evidence" value="ECO:0007669"/>
    <property type="project" value="TreeGrafter"/>
</dbReference>
<dbReference type="GO" id="GO:0006569">
    <property type="term" value="P:L-tryptophan catabolic process"/>
    <property type="evidence" value="ECO:0007669"/>
    <property type="project" value="UniProtKB-UniRule"/>
</dbReference>
<dbReference type="GO" id="GO:0019805">
    <property type="term" value="P:quinolinate biosynthetic process"/>
    <property type="evidence" value="ECO:0007669"/>
    <property type="project" value="UniProtKB-UniRule"/>
</dbReference>
<dbReference type="FunFam" id="3.50.50.60:FF:000129">
    <property type="entry name" value="Kynurenine 3-monooxygenase"/>
    <property type="match status" value="1"/>
</dbReference>
<dbReference type="Gene3D" id="3.50.50.60">
    <property type="entry name" value="FAD/NAD(P)-binding domain"/>
    <property type="match status" value="1"/>
</dbReference>
<dbReference type="HAMAP" id="MF_01971">
    <property type="entry name" value="Kynurenine_monooxygenase"/>
    <property type="match status" value="1"/>
</dbReference>
<dbReference type="InterPro" id="IPR002938">
    <property type="entry name" value="FAD-bd"/>
</dbReference>
<dbReference type="InterPro" id="IPR036188">
    <property type="entry name" value="FAD/NAD-bd_sf"/>
</dbReference>
<dbReference type="InterPro" id="IPR027545">
    <property type="entry name" value="Kynurenine_monooxygenase"/>
</dbReference>
<dbReference type="PANTHER" id="PTHR46028">
    <property type="entry name" value="KYNURENINE 3-MONOOXYGENASE"/>
    <property type="match status" value="1"/>
</dbReference>
<dbReference type="PANTHER" id="PTHR46028:SF2">
    <property type="entry name" value="KYNURENINE 3-MONOOXYGENASE"/>
    <property type="match status" value="1"/>
</dbReference>
<dbReference type="Pfam" id="PF01494">
    <property type="entry name" value="FAD_binding_3"/>
    <property type="match status" value="1"/>
</dbReference>
<dbReference type="PRINTS" id="PR00420">
    <property type="entry name" value="RNGMNOXGNASE"/>
</dbReference>
<dbReference type="SUPFAM" id="SSF51905">
    <property type="entry name" value="FAD/NAD(P)-binding domain"/>
    <property type="match status" value="1"/>
</dbReference>
<gene>
    <name type="primary">bna4</name>
    <name type="ORF">AO090005001567</name>
</gene>
<organism>
    <name type="scientific">Aspergillus oryzae (strain ATCC 42149 / RIB 40)</name>
    <name type="common">Yellow koji mold</name>
    <dbReference type="NCBI Taxonomy" id="510516"/>
    <lineage>
        <taxon>Eukaryota</taxon>
        <taxon>Fungi</taxon>
        <taxon>Dikarya</taxon>
        <taxon>Ascomycota</taxon>
        <taxon>Pezizomycotina</taxon>
        <taxon>Eurotiomycetes</taxon>
        <taxon>Eurotiomycetidae</taxon>
        <taxon>Eurotiales</taxon>
        <taxon>Aspergillaceae</taxon>
        <taxon>Aspergillus</taxon>
        <taxon>Aspergillus subgen. Circumdati</taxon>
    </lineage>
</organism>
<comment type="function">
    <text evidence="1">Catalyzes the hydroxylation of L-kynurenine (L-Kyn) to form 3-hydroxy-L-kynurenine (L-3OHKyn). Required for synthesis of quinolinic acid.</text>
</comment>
<comment type="catalytic activity">
    <reaction evidence="1">
        <text>L-kynurenine + NADPH + O2 + H(+) = 3-hydroxy-L-kynurenine + NADP(+) + H2O</text>
        <dbReference type="Rhea" id="RHEA:20545"/>
        <dbReference type="ChEBI" id="CHEBI:15377"/>
        <dbReference type="ChEBI" id="CHEBI:15378"/>
        <dbReference type="ChEBI" id="CHEBI:15379"/>
        <dbReference type="ChEBI" id="CHEBI:57783"/>
        <dbReference type="ChEBI" id="CHEBI:57959"/>
        <dbReference type="ChEBI" id="CHEBI:58125"/>
        <dbReference type="ChEBI" id="CHEBI:58349"/>
        <dbReference type="EC" id="1.14.13.9"/>
    </reaction>
</comment>
<comment type="cofactor">
    <cofactor evidence="1">
        <name>FAD</name>
        <dbReference type="ChEBI" id="CHEBI:57692"/>
    </cofactor>
</comment>
<comment type="pathway">
    <text evidence="1">Cofactor biosynthesis; NAD(+) biosynthesis; quinolinate from L-kynurenine: step 1/3.</text>
</comment>
<comment type="subcellular location">
    <subcellularLocation>
        <location evidence="1">Mitochondrion outer membrane</location>
    </subcellularLocation>
</comment>
<comment type="similarity">
    <text evidence="1">Belongs to the aromatic-ring hydroxylase family. KMO subfamily.</text>
</comment>